<evidence type="ECO:0000255" key="1">
    <source>
        <dbReference type="HAMAP-Rule" id="MF_01006"/>
    </source>
</evidence>
<sequence length="270" mass="29334">MDLFQATILGIVQGLTEVLPISSSAHLILIPTFLKWPESGITFDVALHLGTFIALCLYFWRDLIELASDFFTGMADWKHQPTSRRLPFYIIAGTFPAAIVGKLFETTIEELFRKSPSLIALFLIVFALLLAFADTSGSKKWKIEAITLKSAIIIGLAQCLALIPGVSRSGITITAALLLGFNREAAARFSFLLSLPIVAGAALFELSGLLKTGIPPSDVAPLLIGIATSAVFGYISVAFLLKMVQRSSLYPFVWYRIAIGCLALVFINFG</sequence>
<accession>B9M0D1</accession>
<proteinExistence type="inferred from homology"/>
<comment type="function">
    <text evidence="1">Catalyzes the dephosphorylation of undecaprenyl diphosphate (UPP). Confers resistance to bacitracin.</text>
</comment>
<comment type="catalytic activity">
    <reaction evidence="1">
        <text>di-trans,octa-cis-undecaprenyl diphosphate + H2O = di-trans,octa-cis-undecaprenyl phosphate + phosphate + H(+)</text>
        <dbReference type="Rhea" id="RHEA:28094"/>
        <dbReference type="ChEBI" id="CHEBI:15377"/>
        <dbReference type="ChEBI" id="CHEBI:15378"/>
        <dbReference type="ChEBI" id="CHEBI:43474"/>
        <dbReference type="ChEBI" id="CHEBI:58405"/>
        <dbReference type="ChEBI" id="CHEBI:60392"/>
        <dbReference type="EC" id="3.6.1.27"/>
    </reaction>
</comment>
<comment type="subcellular location">
    <subcellularLocation>
        <location evidence="1">Cell inner membrane</location>
        <topology evidence="1">Multi-pass membrane protein</topology>
    </subcellularLocation>
</comment>
<comment type="miscellaneous">
    <text>Bacitracin is thought to be involved in the inhibition of peptidoglycan synthesis by sequestering undecaprenyl diphosphate, thereby reducing the pool of lipid carrier available.</text>
</comment>
<comment type="similarity">
    <text evidence="1">Belongs to the UppP family.</text>
</comment>
<protein>
    <recommendedName>
        <fullName evidence="1">Undecaprenyl-diphosphatase</fullName>
        <ecNumber evidence="1">3.6.1.27</ecNumber>
    </recommendedName>
    <alternativeName>
        <fullName evidence="1">Bacitracin resistance protein</fullName>
    </alternativeName>
    <alternativeName>
        <fullName evidence="1">Undecaprenyl pyrophosphate phosphatase</fullName>
    </alternativeName>
</protein>
<feature type="chain" id="PRO_1000148815" description="Undecaprenyl-diphosphatase">
    <location>
        <begin position="1"/>
        <end position="270"/>
    </location>
</feature>
<feature type="transmembrane region" description="Helical" evidence="1">
    <location>
        <begin position="14"/>
        <end position="34"/>
    </location>
</feature>
<feature type="transmembrane region" description="Helical" evidence="1">
    <location>
        <begin position="40"/>
        <end position="60"/>
    </location>
</feature>
<feature type="transmembrane region" description="Helical" evidence="1">
    <location>
        <begin position="88"/>
        <end position="108"/>
    </location>
</feature>
<feature type="transmembrane region" description="Helical" evidence="1">
    <location>
        <begin position="117"/>
        <end position="137"/>
    </location>
</feature>
<feature type="transmembrane region" description="Helical" evidence="1">
    <location>
        <begin position="146"/>
        <end position="166"/>
    </location>
</feature>
<feature type="transmembrane region" description="Helical" evidence="1">
    <location>
        <begin position="189"/>
        <end position="209"/>
    </location>
</feature>
<feature type="transmembrane region" description="Helical" evidence="1">
    <location>
        <begin position="221"/>
        <end position="241"/>
    </location>
</feature>
<feature type="transmembrane region" description="Helical" evidence="1">
    <location>
        <begin position="249"/>
        <end position="269"/>
    </location>
</feature>
<reference key="1">
    <citation type="submission" date="2009-01" db="EMBL/GenBank/DDBJ databases">
        <title>Complete sequence of Geobacter sp. FRC-32.</title>
        <authorList>
            <consortium name="US DOE Joint Genome Institute"/>
            <person name="Lucas S."/>
            <person name="Copeland A."/>
            <person name="Lapidus A."/>
            <person name="Glavina del Rio T."/>
            <person name="Dalin E."/>
            <person name="Tice H."/>
            <person name="Bruce D."/>
            <person name="Goodwin L."/>
            <person name="Pitluck S."/>
            <person name="Saunders E."/>
            <person name="Brettin T."/>
            <person name="Detter J.C."/>
            <person name="Han C."/>
            <person name="Larimer F."/>
            <person name="Land M."/>
            <person name="Hauser L."/>
            <person name="Kyrpides N."/>
            <person name="Ovchinnikova G."/>
            <person name="Kostka J."/>
            <person name="Richardson P."/>
        </authorList>
    </citation>
    <scope>NUCLEOTIDE SEQUENCE [LARGE SCALE GENOMIC DNA]</scope>
    <source>
        <strain>DSM 22248 / JCM 15807 / FRC-32</strain>
    </source>
</reference>
<dbReference type="EC" id="3.6.1.27" evidence="1"/>
<dbReference type="EMBL" id="CP001390">
    <property type="protein sequence ID" value="ACM18968.1"/>
    <property type="molecule type" value="Genomic_DNA"/>
</dbReference>
<dbReference type="RefSeq" id="WP_012645697.1">
    <property type="nucleotide sequence ID" value="NC_011979.1"/>
</dbReference>
<dbReference type="SMR" id="B9M0D1"/>
<dbReference type="STRING" id="316067.Geob_0603"/>
<dbReference type="KEGG" id="geo:Geob_0603"/>
<dbReference type="eggNOG" id="COG1968">
    <property type="taxonomic scope" value="Bacteria"/>
</dbReference>
<dbReference type="HOGENOM" id="CLU_060296_1_0_7"/>
<dbReference type="OrthoDB" id="9808289at2"/>
<dbReference type="Proteomes" id="UP000007721">
    <property type="component" value="Chromosome"/>
</dbReference>
<dbReference type="GO" id="GO:0005886">
    <property type="term" value="C:plasma membrane"/>
    <property type="evidence" value="ECO:0007669"/>
    <property type="project" value="UniProtKB-SubCell"/>
</dbReference>
<dbReference type="GO" id="GO:0050380">
    <property type="term" value="F:undecaprenyl-diphosphatase activity"/>
    <property type="evidence" value="ECO:0007669"/>
    <property type="project" value="UniProtKB-UniRule"/>
</dbReference>
<dbReference type="GO" id="GO:0071555">
    <property type="term" value="P:cell wall organization"/>
    <property type="evidence" value="ECO:0007669"/>
    <property type="project" value="UniProtKB-KW"/>
</dbReference>
<dbReference type="GO" id="GO:0009252">
    <property type="term" value="P:peptidoglycan biosynthetic process"/>
    <property type="evidence" value="ECO:0007669"/>
    <property type="project" value="UniProtKB-KW"/>
</dbReference>
<dbReference type="GO" id="GO:0008360">
    <property type="term" value="P:regulation of cell shape"/>
    <property type="evidence" value="ECO:0007669"/>
    <property type="project" value="UniProtKB-KW"/>
</dbReference>
<dbReference type="GO" id="GO:0046677">
    <property type="term" value="P:response to antibiotic"/>
    <property type="evidence" value="ECO:0007669"/>
    <property type="project" value="UniProtKB-UniRule"/>
</dbReference>
<dbReference type="HAMAP" id="MF_01006">
    <property type="entry name" value="Undec_diphosphatase"/>
    <property type="match status" value="1"/>
</dbReference>
<dbReference type="InterPro" id="IPR003824">
    <property type="entry name" value="UppP"/>
</dbReference>
<dbReference type="NCBIfam" id="NF001393">
    <property type="entry name" value="PRK00281.2-4"/>
    <property type="match status" value="1"/>
</dbReference>
<dbReference type="NCBIfam" id="TIGR00753">
    <property type="entry name" value="undec_PP_bacA"/>
    <property type="match status" value="1"/>
</dbReference>
<dbReference type="PANTHER" id="PTHR30622">
    <property type="entry name" value="UNDECAPRENYL-DIPHOSPHATASE"/>
    <property type="match status" value="1"/>
</dbReference>
<dbReference type="PANTHER" id="PTHR30622:SF4">
    <property type="entry name" value="UNDECAPRENYL-DIPHOSPHATASE"/>
    <property type="match status" value="1"/>
</dbReference>
<dbReference type="Pfam" id="PF02673">
    <property type="entry name" value="BacA"/>
    <property type="match status" value="1"/>
</dbReference>
<name>UPPP_GEODF</name>
<organism>
    <name type="scientific">Geotalea daltonii (strain DSM 22248 / JCM 15807 / FRC-32)</name>
    <name type="common">Geobacter daltonii</name>
    <dbReference type="NCBI Taxonomy" id="316067"/>
    <lineage>
        <taxon>Bacteria</taxon>
        <taxon>Pseudomonadati</taxon>
        <taxon>Thermodesulfobacteriota</taxon>
        <taxon>Desulfuromonadia</taxon>
        <taxon>Geobacterales</taxon>
        <taxon>Geobacteraceae</taxon>
        <taxon>Geotalea</taxon>
    </lineage>
</organism>
<keyword id="KW-0046">Antibiotic resistance</keyword>
<keyword id="KW-0997">Cell inner membrane</keyword>
<keyword id="KW-1003">Cell membrane</keyword>
<keyword id="KW-0133">Cell shape</keyword>
<keyword id="KW-0961">Cell wall biogenesis/degradation</keyword>
<keyword id="KW-0378">Hydrolase</keyword>
<keyword id="KW-0472">Membrane</keyword>
<keyword id="KW-0573">Peptidoglycan synthesis</keyword>
<keyword id="KW-1185">Reference proteome</keyword>
<keyword id="KW-0812">Transmembrane</keyword>
<keyword id="KW-1133">Transmembrane helix</keyword>
<gene>
    <name evidence="1" type="primary">uppP</name>
    <name type="ordered locus">Geob_0603</name>
</gene>